<gene>
    <name evidence="1" type="primary">rpsS</name>
    <name type="ordered locus">BTH_I3064</name>
</gene>
<dbReference type="EMBL" id="CP000086">
    <property type="protein sequence ID" value="ABC38349.1"/>
    <property type="molecule type" value="Genomic_DNA"/>
</dbReference>
<dbReference type="RefSeq" id="WP_004199273.1">
    <property type="nucleotide sequence ID" value="NZ_CP008786.1"/>
</dbReference>
<dbReference type="SMR" id="Q2SU31"/>
<dbReference type="GeneID" id="98107156"/>
<dbReference type="KEGG" id="bte:BTH_I3064"/>
<dbReference type="HOGENOM" id="CLU_144911_0_1_4"/>
<dbReference type="Proteomes" id="UP000001930">
    <property type="component" value="Chromosome I"/>
</dbReference>
<dbReference type="GO" id="GO:0005737">
    <property type="term" value="C:cytoplasm"/>
    <property type="evidence" value="ECO:0007669"/>
    <property type="project" value="UniProtKB-ARBA"/>
</dbReference>
<dbReference type="GO" id="GO:0015935">
    <property type="term" value="C:small ribosomal subunit"/>
    <property type="evidence" value="ECO:0007669"/>
    <property type="project" value="InterPro"/>
</dbReference>
<dbReference type="GO" id="GO:0019843">
    <property type="term" value="F:rRNA binding"/>
    <property type="evidence" value="ECO:0007669"/>
    <property type="project" value="UniProtKB-UniRule"/>
</dbReference>
<dbReference type="GO" id="GO:0003735">
    <property type="term" value="F:structural constituent of ribosome"/>
    <property type="evidence" value="ECO:0007669"/>
    <property type="project" value="InterPro"/>
</dbReference>
<dbReference type="GO" id="GO:0000028">
    <property type="term" value="P:ribosomal small subunit assembly"/>
    <property type="evidence" value="ECO:0007669"/>
    <property type="project" value="TreeGrafter"/>
</dbReference>
<dbReference type="GO" id="GO:0006412">
    <property type="term" value="P:translation"/>
    <property type="evidence" value="ECO:0007669"/>
    <property type="project" value="UniProtKB-UniRule"/>
</dbReference>
<dbReference type="FunFam" id="3.30.860.10:FF:000001">
    <property type="entry name" value="30S ribosomal protein S19"/>
    <property type="match status" value="1"/>
</dbReference>
<dbReference type="Gene3D" id="3.30.860.10">
    <property type="entry name" value="30s Ribosomal Protein S19, Chain A"/>
    <property type="match status" value="1"/>
</dbReference>
<dbReference type="HAMAP" id="MF_00531">
    <property type="entry name" value="Ribosomal_uS19"/>
    <property type="match status" value="1"/>
</dbReference>
<dbReference type="InterPro" id="IPR002222">
    <property type="entry name" value="Ribosomal_uS19"/>
</dbReference>
<dbReference type="InterPro" id="IPR005732">
    <property type="entry name" value="Ribosomal_uS19_bac-type"/>
</dbReference>
<dbReference type="InterPro" id="IPR020934">
    <property type="entry name" value="Ribosomal_uS19_CS"/>
</dbReference>
<dbReference type="InterPro" id="IPR023575">
    <property type="entry name" value="Ribosomal_uS19_SF"/>
</dbReference>
<dbReference type="NCBIfam" id="TIGR01050">
    <property type="entry name" value="rpsS_bact"/>
    <property type="match status" value="1"/>
</dbReference>
<dbReference type="PANTHER" id="PTHR11880">
    <property type="entry name" value="RIBOSOMAL PROTEIN S19P FAMILY MEMBER"/>
    <property type="match status" value="1"/>
</dbReference>
<dbReference type="PANTHER" id="PTHR11880:SF8">
    <property type="entry name" value="SMALL RIBOSOMAL SUBUNIT PROTEIN US19M"/>
    <property type="match status" value="1"/>
</dbReference>
<dbReference type="Pfam" id="PF00203">
    <property type="entry name" value="Ribosomal_S19"/>
    <property type="match status" value="1"/>
</dbReference>
<dbReference type="PIRSF" id="PIRSF002144">
    <property type="entry name" value="Ribosomal_S19"/>
    <property type="match status" value="1"/>
</dbReference>
<dbReference type="PRINTS" id="PR00975">
    <property type="entry name" value="RIBOSOMALS19"/>
</dbReference>
<dbReference type="SUPFAM" id="SSF54570">
    <property type="entry name" value="Ribosomal protein S19"/>
    <property type="match status" value="1"/>
</dbReference>
<dbReference type="PROSITE" id="PS00323">
    <property type="entry name" value="RIBOSOMAL_S19"/>
    <property type="match status" value="1"/>
</dbReference>
<comment type="function">
    <text evidence="1">Protein S19 forms a complex with S13 that binds strongly to the 16S ribosomal RNA.</text>
</comment>
<comment type="similarity">
    <text evidence="1">Belongs to the universal ribosomal protein uS19 family.</text>
</comment>
<sequence length="91" mass="10108">MARSVKKGPFCDAHLLKKVEAAAASRDKKPIKTWSRRSTILPDFIGLTIAVHNGRQHVPVYISENMVGHKLGEFALTRTFKGHAADKKAKK</sequence>
<proteinExistence type="inferred from homology"/>
<name>RS19_BURTA</name>
<protein>
    <recommendedName>
        <fullName evidence="1">Small ribosomal subunit protein uS19</fullName>
    </recommendedName>
    <alternativeName>
        <fullName evidence="2">30S ribosomal protein S19</fullName>
    </alternativeName>
</protein>
<keyword id="KW-0687">Ribonucleoprotein</keyword>
<keyword id="KW-0689">Ribosomal protein</keyword>
<keyword id="KW-0694">RNA-binding</keyword>
<keyword id="KW-0699">rRNA-binding</keyword>
<organism>
    <name type="scientific">Burkholderia thailandensis (strain ATCC 700388 / DSM 13276 / CCUG 48851 / CIP 106301 / E264)</name>
    <dbReference type="NCBI Taxonomy" id="271848"/>
    <lineage>
        <taxon>Bacteria</taxon>
        <taxon>Pseudomonadati</taxon>
        <taxon>Pseudomonadota</taxon>
        <taxon>Betaproteobacteria</taxon>
        <taxon>Burkholderiales</taxon>
        <taxon>Burkholderiaceae</taxon>
        <taxon>Burkholderia</taxon>
        <taxon>pseudomallei group</taxon>
    </lineage>
</organism>
<accession>Q2SU31</accession>
<evidence type="ECO:0000255" key="1">
    <source>
        <dbReference type="HAMAP-Rule" id="MF_00531"/>
    </source>
</evidence>
<evidence type="ECO:0000305" key="2"/>
<reference key="1">
    <citation type="journal article" date="2005" name="BMC Genomics">
        <title>Bacterial genome adaptation to niches: divergence of the potential virulence genes in three Burkholderia species of different survival strategies.</title>
        <authorList>
            <person name="Kim H.S."/>
            <person name="Schell M.A."/>
            <person name="Yu Y."/>
            <person name="Ulrich R.L."/>
            <person name="Sarria S.H."/>
            <person name="Nierman W.C."/>
            <person name="DeShazer D."/>
        </authorList>
    </citation>
    <scope>NUCLEOTIDE SEQUENCE [LARGE SCALE GENOMIC DNA]</scope>
    <source>
        <strain>ATCC 700388 / DSM 13276 / CCUG 48851 / CIP 106301 / E264</strain>
    </source>
</reference>
<feature type="chain" id="PRO_0000265338" description="Small ribosomal subunit protein uS19">
    <location>
        <begin position="1"/>
        <end position="91"/>
    </location>
</feature>